<gene>
    <name evidence="1" type="primary">rpl7ae</name>
    <name type="ordered locus">LS215_2197</name>
</gene>
<name>RL7A_SACI2</name>
<accession>C3MJN1</accession>
<evidence type="ECO:0000255" key="1">
    <source>
        <dbReference type="HAMAP-Rule" id="MF_00326"/>
    </source>
</evidence>
<evidence type="ECO:0000305" key="2"/>
<protein>
    <recommendedName>
        <fullName evidence="1">Large ribosomal subunit protein eL8</fullName>
    </recommendedName>
    <alternativeName>
        <fullName evidence="2">50S ribosomal protein L7Ae</fullName>
    </alternativeName>
    <alternativeName>
        <fullName evidence="1">Ribosomal protein L8e</fullName>
    </alternativeName>
</protein>
<keyword id="KW-0963">Cytoplasm</keyword>
<keyword id="KW-0687">Ribonucleoprotein</keyword>
<keyword id="KW-0689">Ribosomal protein</keyword>
<keyword id="KW-0694">RNA-binding</keyword>
<keyword id="KW-0699">rRNA-binding</keyword>
<keyword id="KW-0819">tRNA processing</keyword>
<feature type="chain" id="PRO_1000205161" description="Large ribosomal subunit protein eL8">
    <location>
        <begin position="1"/>
        <end position="127"/>
    </location>
</feature>
<reference key="1">
    <citation type="journal article" date="2009" name="Proc. Natl. Acad. Sci. U.S.A.">
        <title>Biogeography of the Sulfolobus islandicus pan-genome.</title>
        <authorList>
            <person name="Reno M.L."/>
            <person name="Held N.L."/>
            <person name="Fields C.J."/>
            <person name="Burke P.V."/>
            <person name="Whitaker R.J."/>
        </authorList>
    </citation>
    <scope>NUCLEOTIDE SEQUENCE [LARGE SCALE GENOMIC DNA]</scope>
    <source>
        <strain>L.S.2.15 / Lassen #1</strain>
    </source>
</reference>
<dbReference type="EMBL" id="CP001399">
    <property type="protein sequence ID" value="ACP36184.1"/>
    <property type="molecule type" value="Genomic_DNA"/>
</dbReference>
<dbReference type="RefSeq" id="WP_012711999.1">
    <property type="nucleotide sequence ID" value="NC_012589.1"/>
</dbReference>
<dbReference type="SMR" id="C3MJN1"/>
<dbReference type="GeneID" id="84062343"/>
<dbReference type="KEGG" id="sis:LS215_2197"/>
<dbReference type="HOGENOM" id="CLU_084513_4_0_2"/>
<dbReference type="OrthoDB" id="25810at2157"/>
<dbReference type="Proteomes" id="UP000001747">
    <property type="component" value="Chromosome"/>
</dbReference>
<dbReference type="GO" id="GO:0005737">
    <property type="term" value="C:cytoplasm"/>
    <property type="evidence" value="ECO:0007669"/>
    <property type="project" value="UniProtKB-SubCell"/>
</dbReference>
<dbReference type="GO" id="GO:1990904">
    <property type="term" value="C:ribonucleoprotein complex"/>
    <property type="evidence" value="ECO:0007669"/>
    <property type="project" value="UniProtKB-KW"/>
</dbReference>
<dbReference type="GO" id="GO:0005840">
    <property type="term" value="C:ribosome"/>
    <property type="evidence" value="ECO:0007669"/>
    <property type="project" value="UniProtKB-KW"/>
</dbReference>
<dbReference type="GO" id="GO:0004526">
    <property type="term" value="F:ribonuclease P activity"/>
    <property type="evidence" value="ECO:0007669"/>
    <property type="project" value="UniProtKB-UniRule"/>
</dbReference>
<dbReference type="GO" id="GO:0019843">
    <property type="term" value="F:rRNA binding"/>
    <property type="evidence" value="ECO:0007669"/>
    <property type="project" value="UniProtKB-KW"/>
</dbReference>
<dbReference type="GO" id="GO:0003735">
    <property type="term" value="F:structural constituent of ribosome"/>
    <property type="evidence" value="ECO:0007669"/>
    <property type="project" value="InterPro"/>
</dbReference>
<dbReference type="GO" id="GO:0042254">
    <property type="term" value="P:ribosome biogenesis"/>
    <property type="evidence" value="ECO:0007669"/>
    <property type="project" value="InterPro"/>
</dbReference>
<dbReference type="GO" id="GO:0006412">
    <property type="term" value="P:translation"/>
    <property type="evidence" value="ECO:0007669"/>
    <property type="project" value="UniProtKB-UniRule"/>
</dbReference>
<dbReference type="GO" id="GO:0001682">
    <property type="term" value="P:tRNA 5'-leader removal"/>
    <property type="evidence" value="ECO:0007669"/>
    <property type="project" value="UniProtKB-UniRule"/>
</dbReference>
<dbReference type="FunFam" id="3.30.1330.30:FF:000020">
    <property type="entry name" value="50S ribosomal protein L7Ae"/>
    <property type="match status" value="1"/>
</dbReference>
<dbReference type="Gene3D" id="3.30.1330.30">
    <property type="match status" value="1"/>
</dbReference>
<dbReference type="HAMAP" id="MF_00326">
    <property type="entry name" value="Ribosomal_eL8"/>
    <property type="match status" value="1"/>
</dbReference>
<dbReference type="InterPro" id="IPR050257">
    <property type="entry name" value="eL8/uL1-like"/>
</dbReference>
<dbReference type="InterPro" id="IPR029064">
    <property type="entry name" value="Ribosomal_eL30-like_sf"/>
</dbReference>
<dbReference type="InterPro" id="IPR004037">
    <property type="entry name" value="Ribosomal_eL8-like_CS"/>
</dbReference>
<dbReference type="InterPro" id="IPR004038">
    <property type="entry name" value="Ribosomal_eL8/eL30/eS12/Gad45"/>
</dbReference>
<dbReference type="InterPro" id="IPR018492">
    <property type="entry name" value="Ribosomal_eL8/Nhp2"/>
</dbReference>
<dbReference type="InterPro" id="IPR022481">
    <property type="entry name" value="Ribosomal_eL8_arc"/>
</dbReference>
<dbReference type="NCBIfam" id="TIGR03677">
    <property type="entry name" value="eL8_ribo"/>
    <property type="match status" value="1"/>
</dbReference>
<dbReference type="PANTHER" id="PTHR23105">
    <property type="entry name" value="RIBOSOMAL PROTEIN L7AE FAMILY MEMBER"/>
    <property type="match status" value="1"/>
</dbReference>
<dbReference type="Pfam" id="PF01248">
    <property type="entry name" value="Ribosomal_L7Ae"/>
    <property type="match status" value="1"/>
</dbReference>
<dbReference type="PRINTS" id="PR00881">
    <property type="entry name" value="L7ARS6FAMILY"/>
</dbReference>
<dbReference type="PRINTS" id="PR00884">
    <property type="entry name" value="RIBOSOMALHS6"/>
</dbReference>
<dbReference type="SUPFAM" id="SSF55315">
    <property type="entry name" value="L30e-like"/>
    <property type="match status" value="1"/>
</dbReference>
<dbReference type="PROSITE" id="PS01082">
    <property type="entry name" value="RIBOSOMAL_L7AE"/>
    <property type="match status" value="1"/>
</dbReference>
<sequence length="127" mass="13708">MSKASYVKFEVPQDLADKVLEAVRKAKESGKIKKGTNETTKAVERGQAKLVVIAEDVQPEEIVAHLPLLCDEKKIPYVYVSSKKALGEACGLQVATASAAILEPGEAKDLVDEIVKRVNEIKGKTSS</sequence>
<organism>
    <name type="scientific">Saccharolobus islandicus (strain L.S.2.15 / Lassen #1)</name>
    <name type="common">Sulfolobus islandicus</name>
    <dbReference type="NCBI Taxonomy" id="429572"/>
    <lineage>
        <taxon>Archaea</taxon>
        <taxon>Thermoproteota</taxon>
        <taxon>Thermoprotei</taxon>
        <taxon>Sulfolobales</taxon>
        <taxon>Sulfolobaceae</taxon>
        <taxon>Saccharolobus</taxon>
    </lineage>
</organism>
<comment type="function">
    <text evidence="1">Multifunctional RNA-binding protein that recognizes the K-turn motif in ribosomal RNA, the RNA component of RNase P, box H/ACA, box C/D and box C'/D' sRNAs.</text>
</comment>
<comment type="subunit">
    <text evidence="1">Part of the 50S ribosomal subunit. Probably part of the RNase P complex.</text>
</comment>
<comment type="subcellular location">
    <subcellularLocation>
        <location evidence="1">Cytoplasm</location>
    </subcellularLocation>
</comment>
<comment type="similarity">
    <text evidence="1">Belongs to the eukaryotic ribosomal protein eL8 family.</text>
</comment>
<proteinExistence type="inferred from homology"/>